<protein>
    <recommendedName>
        <fullName>NADH-quinone oxidoreductase subunit L</fullName>
        <ecNumber>7.1.1.-</ecNumber>
    </recommendedName>
    <alternativeName>
        <fullName>NADH dehydrogenase I subunit L</fullName>
    </alternativeName>
    <alternativeName>
        <fullName>NDH-1 subunit L</fullName>
    </alternativeName>
</protein>
<keyword id="KW-1003">Cell membrane</keyword>
<keyword id="KW-0472">Membrane</keyword>
<keyword id="KW-0520">NAD</keyword>
<keyword id="KW-0874">Quinone</keyword>
<keyword id="KW-1185">Reference proteome</keyword>
<keyword id="KW-1278">Translocase</keyword>
<keyword id="KW-0812">Transmembrane</keyword>
<keyword id="KW-1133">Transmembrane helix</keyword>
<gene>
    <name type="primary">nuoL</name>
    <name type="ordered locus">Rv3156</name>
    <name type="ORF">MTCY03A2.02c</name>
</gene>
<dbReference type="EC" id="7.1.1.-"/>
<dbReference type="EMBL" id="AL123456">
    <property type="protein sequence ID" value="CCP45967.1"/>
    <property type="molecule type" value="Genomic_DNA"/>
</dbReference>
<dbReference type="PIR" id="B70946">
    <property type="entry name" value="B70946"/>
</dbReference>
<dbReference type="RefSeq" id="NP_217672.1">
    <property type="nucleotide sequence ID" value="NC_000962.3"/>
</dbReference>
<dbReference type="RefSeq" id="WP_003900642.1">
    <property type="nucleotide sequence ID" value="NZ_NVQJ01000019.1"/>
</dbReference>
<dbReference type="SMR" id="P9WIW1"/>
<dbReference type="FunCoup" id="P9WIW1">
    <property type="interactions" value="120"/>
</dbReference>
<dbReference type="STRING" id="83332.Rv3156"/>
<dbReference type="PaxDb" id="83332-Rv3156"/>
<dbReference type="DNASU" id="888063"/>
<dbReference type="GeneID" id="888063"/>
<dbReference type="KEGG" id="mtu:Rv3156"/>
<dbReference type="KEGG" id="mtv:RVBD_3156"/>
<dbReference type="TubercuList" id="Rv3156"/>
<dbReference type="eggNOG" id="COG1009">
    <property type="taxonomic scope" value="Bacteria"/>
</dbReference>
<dbReference type="InParanoid" id="P9WIW1"/>
<dbReference type="OrthoDB" id="9811798at2"/>
<dbReference type="PhylomeDB" id="P9WIW1"/>
<dbReference type="Proteomes" id="UP000001584">
    <property type="component" value="Chromosome"/>
</dbReference>
<dbReference type="GO" id="GO:0005886">
    <property type="term" value="C:plasma membrane"/>
    <property type="evidence" value="ECO:0007669"/>
    <property type="project" value="UniProtKB-SubCell"/>
</dbReference>
<dbReference type="GO" id="GO:0008137">
    <property type="term" value="F:NADH dehydrogenase (ubiquinone) activity"/>
    <property type="evidence" value="ECO:0007669"/>
    <property type="project" value="InterPro"/>
</dbReference>
<dbReference type="GO" id="GO:0048038">
    <property type="term" value="F:quinone binding"/>
    <property type="evidence" value="ECO:0007669"/>
    <property type="project" value="UniProtKB-KW"/>
</dbReference>
<dbReference type="GO" id="GO:0042773">
    <property type="term" value="P:ATP synthesis coupled electron transport"/>
    <property type="evidence" value="ECO:0007669"/>
    <property type="project" value="InterPro"/>
</dbReference>
<dbReference type="GO" id="GO:0015990">
    <property type="term" value="P:electron transport coupled proton transport"/>
    <property type="evidence" value="ECO:0000318"/>
    <property type="project" value="GO_Central"/>
</dbReference>
<dbReference type="Gene3D" id="1.20.5.2700">
    <property type="match status" value="1"/>
</dbReference>
<dbReference type="InterPro" id="IPR018393">
    <property type="entry name" value="NADHpl_OxRdtase_5_subgr"/>
</dbReference>
<dbReference type="InterPro" id="IPR001750">
    <property type="entry name" value="ND/Mrp_TM"/>
</dbReference>
<dbReference type="InterPro" id="IPR003945">
    <property type="entry name" value="NU5C-like"/>
</dbReference>
<dbReference type="InterPro" id="IPR001516">
    <property type="entry name" value="Proton_antipo_N"/>
</dbReference>
<dbReference type="NCBIfam" id="TIGR01974">
    <property type="entry name" value="NDH_I_L"/>
    <property type="match status" value="1"/>
</dbReference>
<dbReference type="NCBIfam" id="NF005141">
    <property type="entry name" value="PRK06590.1"/>
    <property type="match status" value="1"/>
</dbReference>
<dbReference type="PANTHER" id="PTHR42829">
    <property type="entry name" value="NADH-UBIQUINONE OXIDOREDUCTASE CHAIN 5"/>
    <property type="match status" value="1"/>
</dbReference>
<dbReference type="PANTHER" id="PTHR42829:SF2">
    <property type="entry name" value="NADH-UBIQUINONE OXIDOREDUCTASE CHAIN 5"/>
    <property type="match status" value="1"/>
</dbReference>
<dbReference type="Pfam" id="PF00361">
    <property type="entry name" value="Proton_antipo_M"/>
    <property type="match status" value="1"/>
</dbReference>
<dbReference type="Pfam" id="PF00662">
    <property type="entry name" value="Proton_antipo_N"/>
    <property type="match status" value="1"/>
</dbReference>
<dbReference type="PRINTS" id="PR01434">
    <property type="entry name" value="NADHDHGNASE5"/>
</dbReference>
<dbReference type="PRINTS" id="PR01435">
    <property type="entry name" value="NPOXDRDTASE5"/>
</dbReference>
<reference key="1">
    <citation type="journal article" date="1998" name="Nature">
        <title>Deciphering the biology of Mycobacterium tuberculosis from the complete genome sequence.</title>
        <authorList>
            <person name="Cole S.T."/>
            <person name="Brosch R."/>
            <person name="Parkhill J."/>
            <person name="Garnier T."/>
            <person name="Churcher C.M."/>
            <person name="Harris D.E."/>
            <person name="Gordon S.V."/>
            <person name="Eiglmeier K."/>
            <person name="Gas S."/>
            <person name="Barry C.E. III"/>
            <person name="Tekaia F."/>
            <person name="Badcock K."/>
            <person name="Basham D."/>
            <person name="Brown D."/>
            <person name="Chillingworth T."/>
            <person name="Connor R."/>
            <person name="Davies R.M."/>
            <person name="Devlin K."/>
            <person name="Feltwell T."/>
            <person name="Gentles S."/>
            <person name="Hamlin N."/>
            <person name="Holroyd S."/>
            <person name="Hornsby T."/>
            <person name="Jagels K."/>
            <person name="Krogh A."/>
            <person name="McLean J."/>
            <person name="Moule S."/>
            <person name="Murphy L.D."/>
            <person name="Oliver S."/>
            <person name="Osborne J."/>
            <person name="Quail M.A."/>
            <person name="Rajandream M.A."/>
            <person name="Rogers J."/>
            <person name="Rutter S."/>
            <person name="Seeger K."/>
            <person name="Skelton S."/>
            <person name="Squares S."/>
            <person name="Squares R."/>
            <person name="Sulston J.E."/>
            <person name="Taylor K."/>
            <person name="Whitehead S."/>
            <person name="Barrell B.G."/>
        </authorList>
    </citation>
    <scope>NUCLEOTIDE SEQUENCE [LARGE SCALE GENOMIC DNA]</scope>
    <source>
        <strain>ATCC 25618 / H37Rv</strain>
    </source>
</reference>
<reference key="2">
    <citation type="journal article" date="2011" name="Mol. Cell. Proteomics">
        <title>Proteogenomic analysis of Mycobacterium tuberculosis by high resolution mass spectrometry.</title>
        <authorList>
            <person name="Kelkar D.S."/>
            <person name="Kumar D."/>
            <person name="Kumar P."/>
            <person name="Balakrishnan L."/>
            <person name="Muthusamy B."/>
            <person name="Yadav A.K."/>
            <person name="Shrivastava P."/>
            <person name="Marimuthu A."/>
            <person name="Anand S."/>
            <person name="Sundaram H."/>
            <person name="Kingsbury R."/>
            <person name="Harsha H.C."/>
            <person name="Nair B."/>
            <person name="Prasad T.S."/>
            <person name="Chauhan D.S."/>
            <person name="Katoch K."/>
            <person name="Katoch V.M."/>
            <person name="Kumar P."/>
            <person name="Chaerkady R."/>
            <person name="Ramachandran S."/>
            <person name="Dash D."/>
            <person name="Pandey A."/>
        </authorList>
    </citation>
    <scope>IDENTIFICATION BY MASS SPECTROMETRY [LARGE SCALE ANALYSIS]</scope>
    <source>
        <strain>ATCC 25618 / H37Rv</strain>
    </source>
</reference>
<name>NUOL_MYCTU</name>
<proteinExistence type="evidence at protein level"/>
<evidence type="ECO:0000250" key="1"/>
<evidence type="ECO:0000255" key="2"/>
<evidence type="ECO:0000305" key="3"/>
<comment type="function">
    <text evidence="1">NDH-1 shuttles electrons from NADH, via FMN and iron-sulfur (Fe-S) centers, to quinones in the respiratory chain. The immediate electron acceptor for the enzyme in this species is believed to be menaquinone. Couples the redox reaction to proton translocation (for every two electrons transferred, four hydrogen ions are translocated across the cytoplasmic membrane), and thus conserves the redox energy in a proton gradient (By similarity).</text>
</comment>
<comment type="catalytic activity">
    <reaction>
        <text>a quinone + NADH + 5 H(+)(in) = a quinol + NAD(+) + 4 H(+)(out)</text>
        <dbReference type="Rhea" id="RHEA:57888"/>
        <dbReference type="ChEBI" id="CHEBI:15378"/>
        <dbReference type="ChEBI" id="CHEBI:24646"/>
        <dbReference type="ChEBI" id="CHEBI:57540"/>
        <dbReference type="ChEBI" id="CHEBI:57945"/>
        <dbReference type="ChEBI" id="CHEBI:132124"/>
    </reaction>
</comment>
<comment type="subcellular location">
    <subcellularLocation>
        <location evidence="3">Cell membrane</location>
        <topology evidence="3">Multi-pass membrane protein</topology>
    </subcellularLocation>
</comment>
<comment type="similarity">
    <text evidence="3">Belongs to the complex I subunit 5 family.</text>
</comment>
<accession>P9WIW1</accession>
<accession>L0TBP6</accession>
<accession>O86350</accession>
<sequence>MTTSLGTHYTWLLVALPLAGAAILLFGGRRTDAWGHLLGCAAALAAFGVGAMLLADMLGRDGLERAIHQQVFTWIPAGGLQVDFGLQIDQLSMCFVLLISGVGSLIHIYSVGYMAEDPDRRRFFGYLNLFLASMLLLVVADNYVLLYVGWEGVGLASYLLIGFWYHKPSAATAAKKAFVMNRVGDAGLAVGMFLTFSTFGTLSYAGVFAGVPAASRAVLTAIGLLMLLGACAKSAQVPLQAWLGDAMEGPTPVSALIHAATMVTAGVYLIVRSGPLYNLAPTAQLAVVIVGAVTLLFGAIIGCAKDDIKRALAASTISQIGYMVLAAGLGPAGYAFAIMHLLTHGFFKAGLFLGSGAVIHAMHEEQDMRRYGGLRAALPVTFATFGLAYLAIIGVPPFAGFFSKDAIIEAALGAGGIRGSLLGGAALLGAGVTAFYMTRVMLMTFFGEKRWTPGAHPHEAPAVMTWPMILLAVGSVFSGGLLAVGGTLRHWLQPVVGSHEEATHALPTWVATTLALGVVAVGIAVAYRMYGTAPIPRVAPVRVSALTAAARADLYGDAFNEEVFMRPGAQLTNAVVAVDDAGVDGSVNALATLVSQTSNRLRQMQTGFARNYALSMLVGAVLVAAALLVVQLW</sequence>
<feature type="chain" id="PRO_0000118218" description="NADH-quinone oxidoreductase subunit L">
    <location>
        <begin position="1"/>
        <end position="633"/>
    </location>
</feature>
<feature type="transmembrane region" description="Helical" evidence="2">
    <location>
        <begin position="8"/>
        <end position="28"/>
    </location>
</feature>
<feature type="transmembrane region" description="Helical" evidence="2">
    <location>
        <begin position="34"/>
        <end position="54"/>
    </location>
</feature>
<feature type="transmembrane region" description="Helical" evidence="2">
    <location>
        <begin position="95"/>
        <end position="115"/>
    </location>
</feature>
<feature type="transmembrane region" description="Helical" evidence="2">
    <location>
        <begin position="123"/>
        <end position="143"/>
    </location>
</feature>
<feature type="transmembrane region" description="Helical" evidence="2">
    <location>
        <begin position="188"/>
        <end position="208"/>
    </location>
</feature>
<feature type="transmembrane region" description="Helical" evidence="2">
    <location>
        <begin position="209"/>
        <end position="229"/>
    </location>
</feature>
<feature type="transmembrane region" description="Helical" evidence="2">
    <location>
        <begin position="251"/>
        <end position="271"/>
    </location>
</feature>
<feature type="transmembrane region" description="Helical" evidence="2">
    <location>
        <begin position="284"/>
        <end position="304"/>
    </location>
</feature>
<feature type="transmembrane region" description="Helical" evidence="2">
    <location>
        <begin position="322"/>
        <end position="342"/>
    </location>
</feature>
<feature type="transmembrane region" description="Helical" evidence="2">
    <location>
        <begin position="382"/>
        <end position="402"/>
    </location>
</feature>
<feature type="transmembrane region" description="Helical" evidence="2">
    <location>
        <begin position="412"/>
        <end position="432"/>
    </location>
</feature>
<feature type="transmembrane region" description="Helical" evidence="2">
    <location>
        <begin position="468"/>
        <end position="488"/>
    </location>
</feature>
<feature type="transmembrane region" description="Helical" evidence="2">
    <location>
        <begin position="505"/>
        <end position="525"/>
    </location>
</feature>
<feature type="transmembrane region" description="Helical" evidence="2">
    <location>
        <begin position="613"/>
        <end position="633"/>
    </location>
</feature>
<organism>
    <name type="scientific">Mycobacterium tuberculosis (strain ATCC 25618 / H37Rv)</name>
    <dbReference type="NCBI Taxonomy" id="83332"/>
    <lineage>
        <taxon>Bacteria</taxon>
        <taxon>Bacillati</taxon>
        <taxon>Actinomycetota</taxon>
        <taxon>Actinomycetes</taxon>
        <taxon>Mycobacteriales</taxon>
        <taxon>Mycobacteriaceae</taxon>
        <taxon>Mycobacterium</taxon>
        <taxon>Mycobacterium tuberculosis complex</taxon>
    </lineage>
</organism>